<accession>P9WLZ6</accession>
<accession>L0T6M8</accession>
<accession>Q11034</accession>
<keyword id="KW-0067">ATP-binding</keyword>
<keyword id="KW-0378">Hydrolase</keyword>
<keyword id="KW-0418">Kinase</keyword>
<keyword id="KW-0460">Magnesium</keyword>
<keyword id="KW-0464">Manganese</keyword>
<keyword id="KW-0479">Metal-binding</keyword>
<keyword id="KW-0547">Nucleotide-binding</keyword>
<keyword id="KW-0597">Phosphoprotein</keyword>
<keyword id="KW-0904">Protein phosphatase</keyword>
<keyword id="KW-1185">Reference proteome</keyword>
<keyword id="KW-0723">Serine/threonine-protein kinase</keyword>
<keyword id="KW-0808">Transferase</keyword>
<protein>
    <recommendedName>
        <fullName evidence="1">Multidomain regulatory protein MT1410</fullName>
    </recommendedName>
    <alternativeName>
        <fullName evidence="1">Anti-sigma-F factor MT1410</fullName>
        <shortName evidence="1">Anti-SigF factor</shortName>
    </alternativeName>
    <alternativeName>
        <fullName evidence="1">Protein-serine/threonine phosphatase</fullName>
        <ecNumber evidence="1">3.1.3.16</ecNumber>
    </alternativeName>
    <alternativeName>
        <fullName evidence="1">Serine/threonine-protein kinase</fullName>
        <ecNumber evidence="1">2.7.11.1</ecNumber>
    </alternativeName>
</protein>
<sequence length="653" mass="69582">MAAEMDWDKTVGAAEDVRRIFEHIPAILVGLEGPDHRFVAVNAAYRGFSPLLDTVGQPAREVYPELEGQQIYEMLDRVYQTGEPQSGSEWRLQTDYDGSGVEERYFDFVVTPRRRADGSIEGVQLIVDDVTSRVRARQAAEARVEELSERYRNVRDSATVMQQALLAASVPVVPGADIAAEYLVAAEDTAAGGDWFDALALGDRLVLVVGDVVGHGVEAAAVMSQLRTALRMQISAGYTVVEALEAVDRFHKQVPGSKSATMCVGSLDFTSGEFQYCTAGHPPPLLVTADASARYVEPTGAGPLGSGTGFPVRSEVLNIGDAILFYTDGLIERPGRPLEASTAEFADLAASIASGSGGFVLDAPARPIDRLCSDTLELLLRSTGYNDDVTLLAMQRRAPTPPLHITLDATINAARTVRAQLREWLAEIGADHSDIADIVHAISEFVENAVEHGYATDVSKGIVVEAALAGDGNVRASVIDRGQWKDHRDGARGRGRGLAMAEALVSEARIMHGAGGTTATLTHRLSRPARFVTDTMVRRAAFQQTIDSEFVSLVESGRIVVRGDVDSTTAATLDRQIAVESRSGIAPVTIDLSAVTHLGSAGVGALAAACDRARKQGTECVLVAPPGSPAHHVLSLVQLPVVGADTEDIFAQE</sequence>
<organism>
    <name type="scientific">Mycobacterium tuberculosis (strain CDC 1551 / Oshkosh)</name>
    <dbReference type="NCBI Taxonomy" id="83331"/>
    <lineage>
        <taxon>Bacteria</taxon>
        <taxon>Bacillati</taxon>
        <taxon>Actinomycetota</taxon>
        <taxon>Actinomycetes</taxon>
        <taxon>Mycobacteriales</taxon>
        <taxon>Mycobacteriaceae</taxon>
        <taxon>Mycobacterium</taxon>
        <taxon>Mycobacterium tuberculosis complex</taxon>
    </lineage>
</organism>
<comment type="function">
    <text evidence="1">Primarily acts as an independent SigF regulator that is sensitive to the osmosensory signal, mediating the cross talk of PknD with the SigF regulon. Possesses both phosphatase and kinase activities. The kinase domain functions as a classic anti-sigma factor-like kinase to phosphorylate the anti-anti-sigma factor domain at the canonical regulatory site, and the phosphatase domain antagonizes this activity.</text>
</comment>
<comment type="catalytic activity">
    <reaction evidence="1 4">
        <text>O-phospho-L-seryl-[protein] + H2O = L-seryl-[protein] + phosphate</text>
        <dbReference type="Rhea" id="RHEA:20629"/>
        <dbReference type="Rhea" id="RHEA-COMP:9863"/>
        <dbReference type="Rhea" id="RHEA-COMP:11604"/>
        <dbReference type="ChEBI" id="CHEBI:15377"/>
        <dbReference type="ChEBI" id="CHEBI:29999"/>
        <dbReference type="ChEBI" id="CHEBI:43474"/>
        <dbReference type="ChEBI" id="CHEBI:83421"/>
        <dbReference type="EC" id="3.1.3.16"/>
    </reaction>
</comment>
<comment type="catalytic activity">
    <reaction evidence="1 4">
        <text>O-phospho-L-threonyl-[protein] + H2O = L-threonyl-[protein] + phosphate</text>
        <dbReference type="Rhea" id="RHEA:47004"/>
        <dbReference type="Rhea" id="RHEA-COMP:11060"/>
        <dbReference type="Rhea" id="RHEA-COMP:11605"/>
        <dbReference type="ChEBI" id="CHEBI:15377"/>
        <dbReference type="ChEBI" id="CHEBI:30013"/>
        <dbReference type="ChEBI" id="CHEBI:43474"/>
        <dbReference type="ChEBI" id="CHEBI:61977"/>
        <dbReference type="EC" id="3.1.3.16"/>
    </reaction>
</comment>
<comment type="catalytic activity">
    <reaction evidence="1">
        <text>L-seryl-[protein] + ATP = O-phospho-L-seryl-[protein] + ADP + H(+)</text>
        <dbReference type="Rhea" id="RHEA:17989"/>
        <dbReference type="Rhea" id="RHEA-COMP:9863"/>
        <dbReference type="Rhea" id="RHEA-COMP:11604"/>
        <dbReference type="ChEBI" id="CHEBI:15378"/>
        <dbReference type="ChEBI" id="CHEBI:29999"/>
        <dbReference type="ChEBI" id="CHEBI:30616"/>
        <dbReference type="ChEBI" id="CHEBI:83421"/>
        <dbReference type="ChEBI" id="CHEBI:456216"/>
        <dbReference type="EC" id="2.7.11.1"/>
    </reaction>
</comment>
<comment type="catalytic activity">
    <reaction evidence="1">
        <text>L-threonyl-[protein] + ATP = O-phospho-L-threonyl-[protein] + ADP + H(+)</text>
        <dbReference type="Rhea" id="RHEA:46608"/>
        <dbReference type="Rhea" id="RHEA-COMP:11060"/>
        <dbReference type="Rhea" id="RHEA-COMP:11605"/>
        <dbReference type="ChEBI" id="CHEBI:15378"/>
        <dbReference type="ChEBI" id="CHEBI:30013"/>
        <dbReference type="ChEBI" id="CHEBI:30616"/>
        <dbReference type="ChEBI" id="CHEBI:61977"/>
        <dbReference type="ChEBI" id="CHEBI:456216"/>
        <dbReference type="EC" id="2.7.11.1"/>
    </reaction>
</comment>
<comment type="cofactor">
    <cofactor evidence="4">
        <name>Mg(2+)</name>
        <dbReference type="ChEBI" id="CHEBI:18420"/>
    </cofactor>
    <cofactor evidence="4">
        <name>Mn(2+)</name>
        <dbReference type="ChEBI" id="CHEBI:29035"/>
    </cofactor>
    <text evidence="4">Binds 2 magnesium or manganese ions per subunit.</text>
</comment>
<comment type="PTM">
    <text evidence="1">Autophosphorylated.</text>
</comment>
<comment type="sequence caution" evidence="5">
    <conflict type="erroneous initiation">
        <sequence resource="EMBL-CDS" id="AAK45673"/>
    </conflict>
</comment>
<proteinExistence type="inferred from homology"/>
<reference key="1">
    <citation type="journal article" date="2002" name="J. Bacteriol.">
        <title>Whole-genome comparison of Mycobacterium tuberculosis clinical and laboratory strains.</title>
        <authorList>
            <person name="Fleischmann R.D."/>
            <person name="Alland D."/>
            <person name="Eisen J.A."/>
            <person name="Carpenter L."/>
            <person name="White O."/>
            <person name="Peterson J.D."/>
            <person name="DeBoy R.T."/>
            <person name="Dodson R.J."/>
            <person name="Gwinn M.L."/>
            <person name="Haft D.H."/>
            <person name="Hickey E.K."/>
            <person name="Kolonay J.F."/>
            <person name="Nelson W.C."/>
            <person name="Umayam L.A."/>
            <person name="Ermolaeva M.D."/>
            <person name="Salzberg S.L."/>
            <person name="Delcher A."/>
            <person name="Utterback T.R."/>
            <person name="Weidman J.F."/>
            <person name="Khouri H.M."/>
            <person name="Gill J."/>
            <person name="Mikula A."/>
            <person name="Bishai W."/>
            <person name="Jacobs W.R. Jr."/>
            <person name="Venter J.C."/>
            <person name="Fraser C.M."/>
        </authorList>
    </citation>
    <scope>NUCLEOTIDE SEQUENCE [LARGE SCALE GENOMIC DNA]</scope>
    <source>
        <strain>CDC 1551 / Oshkosh</strain>
    </source>
</reference>
<dbReference type="EC" id="3.1.3.16" evidence="1"/>
<dbReference type="EC" id="2.7.11.1" evidence="1"/>
<dbReference type="EMBL" id="AE000516">
    <property type="protein sequence ID" value="AAK45673.1"/>
    <property type="status" value="ALT_INIT"/>
    <property type="molecule type" value="Genomic_DNA"/>
</dbReference>
<dbReference type="PIR" id="C70742">
    <property type="entry name" value="C70742"/>
</dbReference>
<dbReference type="RefSeq" id="WP_003407159.1">
    <property type="nucleotide sequence ID" value="NZ_KK341227.1"/>
</dbReference>
<dbReference type="SMR" id="P9WLZ6"/>
<dbReference type="KEGG" id="mtc:MT1410"/>
<dbReference type="PATRIC" id="fig|83331.31.peg.1516"/>
<dbReference type="HOGENOM" id="CLU_030485_0_0_11"/>
<dbReference type="Proteomes" id="UP000001020">
    <property type="component" value="Chromosome"/>
</dbReference>
<dbReference type="GO" id="GO:0005524">
    <property type="term" value="F:ATP binding"/>
    <property type="evidence" value="ECO:0007669"/>
    <property type="project" value="UniProtKB-KW"/>
</dbReference>
<dbReference type="GO" id="GO:0046872">
    <property type="term" value="F:metal ion binding"/>
    <property type="evidence" value="ECO:0007669"/>
    <property type="project" value="UniProtKB-KW"/>
</dbReference>
<dbReference type="GO" id="GO:0004674">
    <property type="term" value="F:protein serine/threonine kinase activity"/>
    <property type="evidence" value="ECO:0007669"/>
    <property type="project" value="UniProtKB-KW"/>
</dbReference>
<dbReference type="GO" id="GO:0004722">
    <property type="term" value="F:protein serine/threonine phosphatase activity"/>
    <property type="evidence" value="ECO:0007669"/>
    <property type="project" value="UniProtKB-EC"/>
</dbReference>
<dbReference type="CDD" id="cd16936">
    <property type="entry name" value="HATPase_RsbW-like"/>
    <property type="match status" value="1"/>
</dbReference>
<dbReference type="CDD" id="cd07043">
    <property type="entry name" value="STAS_anti-anti-sigma_factors"/>
    <property type="match status" value="1"/>
</dbReference>
<dbReference type="FunFam" id="3.60.40.10:FF:000005">
    <property type="entry name" value="Serine/threonine protein phosphatase"/>
    <property type="match status" value="1"/>
</dbReference>
<dbReference type="Gene3D" id="3.30.565.10">
    <property type="entry name" value="Histidine kinase-like ATPase, C-terminal domain"/>
    <property type="match status" value="1"/>
</dbReference>
<dbReference type="Gene3D" id="3.30.450.20">
    <property type="entry name" value="PAS domain"/>
    <property type="match status" value="1"/>
</dbReference>
<dbReference type="Gene3D" id="3.60.40.10">
    <property type="entry name" value="PPM-type phosphatase domain"/>
    <property type="match status" value="1"/>
</dbReference>
<dbReference type="Gene3D" id="3.30.750.24">
    <property type="entry name" value="STAS domain"/>
    <property type="match status" value="1"/>
</dbReference>
<dbReference type="InterPro" id="IPR052016">
    <property type="entry name" value="Bact_Sigma-Reg"/>
</dbReference>
<dbReference type="InterPro" id="IPR036890">
    <property type="entry name" value="HATPase_C_sf"/>
</dbReference>
<dbReference type="InterPro" id="IPR000014">
    <property type="entry name" value="PAS"/>
</dbReference>
<dbReference type="InterPro" id="IPR000700">
    <property type="entry name" value="PAS-assoc_C"/>
</dbReference>
<dbReference type="InterPro" id="IPR035965">
    <property type="entry name" value="PAS-like_dom_sf"/>
</dbReference>
<dbReference type="InterPro" id="IPR013656">
    <property type="entry name" value="PAS_4"/>
</dbReference>
<dbReference type="InterPro" id="IPR036457">
    <property type="entry name" value="PPM-type-like_dom_sf"/>
</dbReference>
<dbReference type="InterPro" id="IPR001932">
    <property type="entry name" value="PPM-type_phosphatase-like_dom"/>
</dbReference>
<dbReference type="InterPro" id="IPR002645">
    <property type="entry name" value="STAS_dom"/>
</dbReference>
<dbReference type="InterPro" id="IPR036513">
    <property type="entry name" value="STAS_dom_sf"/>
</dbReference>
<dbReference type="NCBIfam" id="TIGR00229">
    <property type="entry name" value="sensory_box"/>
    <property type="match status" value="1"/>
</dbReference>
<dbReference type="PANTHER" id="PTHR43156:SF2">
    <property type="entry name" value="STAGE II SPORULATION PROTEIN E"/>
    <property type="match status" value="1"/>
</dbReference>
<dbReference type="PANTHER" id="PTHR43156">
    <property type="entry name" value="STAGE II SPORULATION PROTEIN E-RELATED"/>
    <property type="match status" value="1"/>
</dbReference>
<dbReference type="Pfam" id="PF13581">
    <property type="entry name" value="HATPase_c_2"/>
    <property type="match status" value="1"/>
</dbReference>
<dbReference type="Pfam" id="PF08448">
    <property type="entry name" value="PAS_4"/>
    <property type="match status" value="1"/>
</dbReference>
<dbReference type="Pfam" id="PF07228">
    <property type="entry name" value="SpoIIE"/>
    <property type="match status" value="1"/>
</dbReference>
<dbReference type="Pfam" id="PF01740">
    <property type="entry name" value="STAS"/>
    <property type="match status" value="1"/>
</dbReference>
<dbReference type="SMART" id="SM00331">
    <property type="entry name" value="PP2C_SIG"/>
    <property type="match status" value="1"/>
</dbReference>
<dbReference type="SUPFAM" id="SSF55874">
    <property type="entry name" value="ATPase domain of HSP90 chaperone/DNA topoisomerase II/histidine kinase"/>
    <property type="match status" value="1"/>
</dbReference>
<dbReference type="SUPFAM" id="SSF55785">
    <property type="entry name" value="PYP-like sensor domain (PAS domain)"/>
    <property type="match status" value="1"/>
</dbReference>
<dbReference type="SUPFAM" id="SSF52091">
    <property type="entry name" value="SpoIIaa-like"/>
    <property type="match status" value="1"/>
</dbReference>
<dbReference type="PROSITE" id="PS50113">
    <property type="entry name" value="PAC"/>
    <property type="match status" value="1"/>
</dbReference>
<dbReference type="PROSITE" id="PS51746">
    <property type="entry name" value="PPM_2"/>
    <property type="match status" value="1"/>
</dbReference>
<dbReference type="PROSITE" id="PS50801">
    <property type="entry name" value="STAS"/>
    <property type="match status" value="1"/>
</dbReference>
<gene>
    <name type="ordered locus">MT1410</name>
</gene>
<name>MTDRP_MYCTO</name>
<feature type="chain" id="PRO_0000427392" description="Multidomain regulatory protein MT1410">
    <location>
        <begin position="1"/>
        <end position="653"/>
    </location>
</feature>
<feature type="domain" description="PAC" evidence="2">
    <location>
        <begin position="86"/>
        <end position="142"/>
    </location>
</feature>
<feature type="domain" description="PPM-type phosphatase" evidence="4">
    <location>
        <begin position="177"/>
        <end position="396"/>
    </location>
</feature>
<feature type="domain" description="STAS" evidence="3">
    <location>
        <begin position="546"/>
        <end position="653"/>
    </location>
</feature>
<feature type="region of interest" description="Anti-sigma factor kinase region" evidence="1">
    <location>
        <begin position="397"/>
        <end position="544"/>
    </location>
</feature>
<feature type="binding site" evidence="1">
    <location>
        <position position="211"/>
    </location>
    <ligand>
        <name>Mn(2+)</name>
        <dbReference type="ChEBI" id="CHEBI:29035"/>
        <label>1</label>
    </ligand>
</feature>
<feature type="binding site" evidence="1">
    <location>
        <position position="211"/>
    </location>
    <ligand>
        <name>Mn(2+)</name>
        <dbReference type="ChEBI" id="CHEBI:29035"/>
        <label>2</label>
    </ligand>
</feature>
<feature type="binding site" evidence="1">
    <location>
        <position position="212"/>
    </location>
    <ligand>
        <name>Mn(2+)</name>
        <dbReference type="ChEBI" id="CHEBI:29035"/>
        <label>2</label>
    </ligand>
</feature>
<feature type="binding site" evidence="1">
    <location>
        <position position="328"/>
    </location>
    <ligand>
        <name>Mn(2+)</name>
        <dbReference type="ChEBI" id="CHEBI:29035"/>
        <label>1</label>
    </ligand>
</feature>
<feature type="binding site" evidence="1">
    <location>
        <position position="387"/>
    </location>
    <ligand>
        <name>Mn(2+)</name>
        <dbReference type="ChEBI" id="CHEBI:29035"/>
        <label>1</label>
    </ligand>
</feature>
<feature type="modified residue" description="Phosphoserine" evidence="1">
    <location>
        <position position="600"/>
    </location>
</feature>
<evidence type="ECO:0000250" key="1">
    <source>
        <dbReference type="UniProtKB" id="P9WLZ7"/>
    </source>
</evidence>
<evidence type="ECO:0000255" key="2">
    <source>
        <dbReference type="PROSITE-ProRule" id="PRU00141"/>
    </source>
</evidence>
<evidence type="ECO:0000255" key="3">
    <source>
        <dbReference type="PROSITE-ProRule" id="PRU00198"/>
    </source>
</evidence>
<evidence type="ECO:0000255" key="4">
    <source>
        <dbReference type="PROSITE-ProRule" id="PRU01082"/>
    </source>
</evidence>
<evidence type="ECO:0000305" key="5"/>